<keyword id="KW-0068">Autocatalytic cleavage</keyword>
<keyword id="KW-0963">Cytoplasm</keyword>
<keyword id="KW-0210">Decarboxylase</keyword>
<keyword id="KW-0456">Lyase</keyword>
<keyword id="KW-0566">Pantothenate biosynthesis</keyword>
<keyword id="KW-0670">Pyruvate</keyword>
<keyword id="KW-0704">Schiff base</keyword>
<keyword id="KW-0865">Zymogen</keyword>
<accession>B1XCA6</accession>
<comment type="function">
    <text evidence="1">Catalyzes the pyruvoyl-dependent decarboxylation of aspartate to produce beta-alanine.</text>
</comment>
<comment type="catalytic activity">
    <reaction evidence="1">
        <text>L-aspartate + H(+) = beta-alanine + CO2</text>
        <dbReference type="Rhea" id="RHEA:19497"/>
        <dbReference type="ChEBI" id="CHEBI:15378"/>
        <dbReference type="ChEBI" id="CHEBI:16526"/>
        <dbReference type="ChEBI" id="CHEBI:29991"/>
        <dbReference type="ChEBI" id="CHEBI:57966"/>
        <dbReference type="EC" id="4.1.1.11"/>
    </reaction>
</comment>
<comment type="cofactor">
    <cofactor evidence="1">
        <name>pyruvate</name>
        <dbReference type="ChEBI" id="CHEBI:15361"/>
    </cofactor>
    <text evidence="1">Binds 1 pyruvoyl group covalently per subunit.</text>
</comment>
<comment type="pathway">
    <text evidence="1">Cofactor biosynthesis; (R)-pantothenate biosynthesis; beta-alanine from L-aspartate: step 1/1.</text>
</comment>
<comment type="subunit">
    <text evidence="1">Heterooctamer of four alpha and four beta subunits.</text>
</comment>
<comment type="subcellular location">
    <subcellularLocation>
        <location evidence="1">Cytoplasm</location>
    </subcellularLocation>
</comment>
<comment type="PTM">
    <text evidence="1">Is synthesized initially as an inactive proenzyme, which is activated by self-cleavage at a specific serine bond to produce a beta-subunit with a hydroxyl group at its C-terminus and an alpha-subunit with a pyruvoyl group at its N-terminus.</text>
</comment>
<comment type="similarity">
    <text evidence="1">Belongs to the PanD family.</text>
</comment>
<name>PAND_ECODH</name>
<dbReference type="EC" id="4.1.1.11" evidence="1"/>
<dbReference type="EMBL" id="CP000948">
    <property type="protein sequence ID" value="ACB01310.1"/>
    <property type="molecule type" value="Genomic_DNA"/>
</dbReference>
<dbReference type="RefSeq" id="WP_000621515.1">
    <property type="nucleotide sequence ID" value="NC_010473.1"/>
</dbReference>
<dbReference type="SMR" id="B1XCA6"/>
<dbReference type="GeneID" id="93777305"/>
<dbReference type="KEGG" id="ecd:ECDH10B_0111"/>
<dbReference type="HOGENOM" id="CLU_115305_2_1_6"/>
<dbReference type="UniPathway" id="UPA00028">
    <property type="reaction ID" value="UER00002"/>
</dbReference>
<dbReference type="GO" id="GO:0005829">
    <property type="term" value="C:cytosol"/>
    <property type="evidence" value="ECO:0007669"/>
    <property type="project" value="TreeGrafter"/>
</dbReference>
<dbReference type="GO" id="GO:0004068">
    <property type="term" value="F:aspartate 1-decarboxylase activity"/>
    <property type="evidence" value="ECO:0007669"/>
    <property type="project" value="UniProtKB-UniRule"/>
</dbReference>
<dbReference type="GO" id="GO:0006523">
    <property type="term" value="P:alanine biosynthetic process"/>
    <property type="evidence" value="ECO:0007669"/>
    <property type="project" value="InterPro"/>
</dbReference>
<dbReference type="GO" id="GO:0015940">
    <property type="term" value="P:pantothenate biosynthetic process"/>
    <property type="evidence" value="ECO:0007669"/>
    <property type="project" value="UniProtKB-UniRule"/>
</dbReference>
<dbReference type="CDD" id="cd06919">
    <property type="entry name" value="Asp_decarbox"/>
    <property type="match status" value="1"/>
</dbReference>
<dbReference type="FunFam" id="2.40.40.20:FF:000004">
    <property type="entry name" value="Aspartate 1-decarboxylase"/>
    <property type="match status" value="1"/>
</dbReference>
<dbReference type="Gene3D" id="2.40.40.20">
    <property type="match status" value="1"/>
</dbReference>
<dbReference type="HAMAP" id="MF_00446">
    <property type="entry name" value="PanD"/>
    <property type="match status" value="1"/>
</dbReference>
<dbReference type="InterPro" id="IPR009010">
    <property type="entry name" value="Asp_de-COase-like_dom_sf"/>
</dbReference>
<dbReference type="InterPro" id="IPR003190">
    <property type="entry name" value="Asp_decarbox"/>
</dbReference>
<dbReference type="NCBIfam" id="TIGR00223">
    <property type="entry name" value="panD"/>
    <property type="match status" value="1"/>
</dbReference>
<dbReference type="PANTHER" id="PTHR21012">
    <property type="entry name" value="ASPARTATE 1-DECARBOXYLASE"/>
    <property type="match status" value="1"/>
</dbReference>
<dbReference type="PANTHER" id="PTHR21012:SF0">
    <property type="entry name" value="ASPARTATE 1-DECARBOXYLASE"/>
    <property type="match status" value="1"/>
</dbReference>
<dbReference type="Pfam" id="PF02261">
    <property type="entry name" value="Asp_decarbox"/>
    <property type="match status" value="1"/>
</dbReference>
<dbReference type="PIRSF" id="PIRSF006246">
    <property type="entry name" value="Asp_decarbox"/>
    <property type="match status" value="1"/>
</dbReference>
<dbReference type="SUPFAM" id="SSF50692">
    <property type="entry name" value="ADC-like"/>
    <property type="match status" value="1"/>
</dbReference>
<gene>
    <name evidence="1" type="primary">panD</name>
    <name type="ordered locus">ECDH10B_0111</name>
</gene>
<sequence length="126" mass="13834">MIRTMLQGKLHRVKVTHADLHYEGSCAIDQDFLDAAGILENEAIDIWNVTNGKRFSTYAIAAERGSRIISVNGAAAHCASVGDIVIIASFVTMPDEEARTWRPNVAYFEGDNEMKRTAKAIPVQVA</sequence>
<feature type="chain" id="PRO_1000191988" description="Aspartate 1-decarboxylase beta chain" evidence="1">
    <location>
        <begin position="1"/>
        <end position="24"/>
    </location>
</feature>
<feature type="chain" id="PRO_1000191989" description="Aspartate 1-decarboxylase alpha chain" evidence="1">
    <location>
        <begin position="25"/>
        <end position="126"/>
    </location>
</feature>
<feature type="active site" description="Schiff-base intermediate with substrate; via pyruvic acid" evidence="1">
    <location>
        <position position="25"/>
    </location>
</feature>
<feature type="active site" description="Proton donor" evidence="1">
    <location>
        <position position="58"/>
    </location>
</feature>
<feature type="binding site" evidence="1">
    <location>
        <position position="57"/>
    </location>
    <ligand>
        <name>substrate</name>
    </ligand>
</feature>
<feature type="binding site" evidence="1">
    <location>
        <begin position="73"/>
        <end position="75"/>
    </location>
    <ligand>
        <name>substrate</name>
    </ligand>
</feature>
<feature type="modified residue" description="Pyruvic acid (Ser)" evidence="1">
    <location>
        <position position="25"/>
    </location>
</feature>
<organism>
    <name type="scientific">Escherichia coli (strain K12 / DH10B)</name>
    <dbReference type="NCBI Taxonomy" id="316385"/>
    <lineage>
        <taxon>Bacteria</taxon>
        <taxon>Pseudomonadati</taxon>
        <taxon>Pseudomonadota</taxon>
        <taxon>Gammaproteobacteria</taxon>
        <taxon>Enterobacterales</taxon>
        <taxon>Enterobacteriaceae</taxon>
        <taxon>Escherichia</taxon>
    </lineage>
</organism>
<reference key="1">
    <citation type="journal article" date="2008" name="J. Bacteriol.">
        <title>The complete genome sequence of Escherichia coli DH10B: insights into the biology of a laboratory workhorse.</title>
        <authorList>
            <person name="Durfee T."/>
            <person name="Nelson R."/>
            <person name="Baldwin S."/>
            <person name="Plunkett G. III"/>
            <person name="Burland V."/>
            <person name="Mau B."/>
            <person name="Petrosino J.F."/>
            <person name="Qin X."/>
            <person name="Muzny D.M."/>
            <person name="Ayele M."/>
            <person name="Gibbs R.A."/>
            <person name="Csorgo B."/>
            <person name="Posfai G."/>
            <person name="Weinstock G.M."/>
            <person name="Blattner F.R."/>
        </authorList>
    </citation>
    <scope>NUCLEOTIDE SEQUENCE [LARGE SCALE GENOMIC DNA]</scope>
    <source>
        <strain>K12 / DH10B</strain>
    </source>
</reference>
<protein>
    <recommendedName>
        <fullName evidence="1">Aspartate 1-decarboxylase</fullName>
        <ecNumber evidence="1">4.1.1.11</ecNumber>
    </recommendedName>
    <alternativeName>
        <fullName evidence="1">Aspartate alpha-decarboxylase</fullName>
    </alternativeName>
    <component>
        <recommendedName>
            <fullName evidence="1">Aspartate 1-decarboxylase beta chain</fullName>
        </recommendedName>
    </component>
    <component>
        <recommendedName>
            <fullName evidence="1">Aspartate 1-decarboxylase alpha chain</fullName>
        </recommendedName>
    </component>
</protein>
<proteinExistence type="inferred from homology"/>
<evidence type="ECO:0000255" key="1">
    <source>
        <dbReference type="HAMAP-Rule" id="MF_00446"/>
    </source>
</evidence>